<evidence type="ECO:0000255" key="1">
    <source>
        <dbReference type="PROSITE-ProRule" id="PRU00159"/>
    </source>
</evidence>
<evidence type="ECO:0000255" key="2">
    <source>
        <dbReference type="PROSITE-ProRule" id="PRU10028"/>
    </source>
</evidence>
<gene>
    <name type="ordered locus">MIMI_L673</name>
</gene>
<comment type="catalytic activity">
    <reaction>
        <text>L-seryl-[protein] + ATP = O-phospho-L-seryl-[protein] + ADP + H(+)</text>
        <dbReference type="Rhea" id="RHEA:17989"/>
        <dbReference type="Rhea" id="RHEA-COMP:9863"/>
        <dbReference type="Rhea" id="RHEA-COMP:11604"/>
        <dbReference type="ChEBI" id="CHEBI:15378"/>
        <dbReference type="ChEBI" id="CHEBI:29999"/>
        <dbReference type="ChEBI" id="CHEBI:30616"/>
        <dbReference type="ChEBI" id="CHEBI:83421"/>
        <dbReference type="ChEBI" id="CHEBI:456216"/>
        <dbReference type="EC" id="2.7.11.1"/>
    </reaction>
</comment>
<comment type="catalytic activity">
    <reaction>
        <text>L-threonyl-[protein] + ATP = O-phospho-L-threonyl-[protein] + ADP + H(+)</text>
        <dbReference type="Rhea" id="RHEA:46608"/>
        <dbReference type="Rhea" id="RHEA-COMP:11060"/>
        <dbReference type="Rhea" id="RHEA-COMP:11605"/>
        <dbReference type="ChEBI" id="CHEBI:15378"/>
        <dbReference type="ChEBI" id="CHEBI:30013"/>
        <dbReference type="ChEBI" id="CHEBI:30616"/>
        <dbReference type="ChEBI" id="CHEBI:61977"/>
        <dbReference type="ChEBI" id="CHEBI:456216"/>
        <dbReference type="EC" id="2.7.11.1"/>
    </reaction>
</comment>
<comment type="similarity">
    <text evidence="1">Belongs to the protein kinase superfamily. Ser/Thr protein kinase family.</text>
</comment>
<organismHost>
    <name type="scientific">Acanthamoeba polyphaga</name>
    <name type="common">Amoeba</name>
    <dbReference type="NCBI Taxonomy" id="5757"/>
</organismHost>
<organism>
    <name type="scientific">Acanthamoeba polyphaga mimivirus</name>
    <name type="common">APMV</name>
    <dbReference type="NCBI Taxonomy" id="212035"/>
    <lineage>
        <taxon>Viruses</taxon>
        <taxon>Varidnaviria</taxon>
        <taxon>Bamfordvirae</taxon>
        <taxon>Nucleocytoviricota</taxon>
        <taxon>Megaviricetes</taxon>
        <taxon>Imitervirales</taxon>
        <taxon>Mimiviridae</taxon>
        <taxon>Megamimivirinae</taxon>
        <taxon>Mimivirus</taxon>
        <taxon>Mimivirus bradfordmassiliense</taxon>
    </lineage>
</organism>
<dbReference type="EC" id="2.7.11.1"/>
<dbReference type="EMBL" id="AY653733">
    <property type="protein sequence ID" value="AAV50934.1"/>
    <property type="molecule type" value="Genomic_DNA"/>
</dbReference>
<dbReference type="SMR" id="Q5UNT1"/>
<dbReference type="KEGG" id="vg:9925319"/>
<dbReference type="OrthoDB" id="8955at10239"/>
<dbReference type="Proteomes" id="UP000001134">
    <property type="component" value="Genome"/>
</dbReference>
<dbReference type="GO" id="GO:0005524">
    <property type="term" value="F:ATP binding"/>
    <property type="evidence" value="ECO:0007669"/>
    <property type="project" value="UniProtKB-KW"/>
</dbReference>
<dbReference type="GO" id="GO:0106310">
    <property type="term" value="F:protein serine kinase activity"/>
    <property type="evidence" value="ECO:0007669"/>
    <property type="project" value="RHEA"/>
</dbReference>
<dbReference type="GO" id="GO:0004674">
    <property type="term" value="F:protein serine/threonine kinase activity"/>
    <property type="evidence" value="ECO:0007669"/>
    <property type="project" value="UniProtKB-KW"/>
</dbReference>
<dbReference type="FunFam" id="1.10.510.10:FF:000624">
    <property type="entry name" value="Mitogen-activated protein kinase"/>
    <property type="match status" value="1"/>
</dbReference>
<dbReference type="Gene3D" id="1.10.472.10">
    <property type="entry name" value="Cyclin-like"/>
    <property type="match status" value="1"/>
</dbReference>
<dbReference type="Gene3D" id="3.30.200.20">
    <property type="entry name" value="Phosphorylase Kinase, domain 1"/>
    <property type="match status" value="1"/>
</dbReference>
<dbReference type="Gene3D" id="1.10.510.10">
    <property type="entry name" value="Transferase(Phosphotransferase) domain 1"/>
    <property type="match status" value="1"/>
</dbReference>
<dbReference type="InterPro" id="IPR050108">
    <property type="entry name" value="CDK"/>
</dbReference>
<dbReference type="InterPro" id="IPR036915">
    <property type="entry name" value="Cyclin-like_sf"/>
</dbReference>
<dbReference type="InterPro" id="IPR006671">
    <property type="entry name" value="Cyclin_N"/>
</dbReference>
<dbReference type="InterPro" id="IPR011009">
    <property type="entry name" value="Kinase-like_dom_sf"/>
</dbReference>
<dbReference type="InterPro" id="IPR000719">
    <property type="entry name" value="Prot_kinase_dom"/>
</dbReference>
<dbReference type="InterPro" id="IPR017441">
    <property type="entry name" value="Protein_kinase_ATP_BS"/>
</dbReference>
<dbReference type="InterPro" id="IPR008266">
    <property type="entry name" value="Tyr_kinase_AS"/>
</dbReference>
<dbReference type="PANTHER" id="PTHR24056">
    <property type="entry name" value="CELL DIVISION PROTEIN KINASE"/>
    <property type="match status" value="1"/>
</dbReference>
<dbReference type="Pfam" id="PF00134">
    <property type="entry name" value="Cyclin_N"/>
    <property type="match status" value="1"/>
</dbReference>
<dbReference type="Pfam" id="PF00069">
    <property type="entry name" value="Pkinase"/>
    <property type="match status" value="1"/>
</dbReference>
<dbReference type="SUPFAM" id="SSF47954">
    <property type="entry name" value="Cyclin-like"/>
    <property type="match status" value="1"/>
</dbReference>
<dbReference type="SUPFAM" id="SSF56112">
    <property type="entry name" value="Protein kinase-like (PK-like)"/>
    <property type="match status" value="1"/>
</dbReference>
<dbReference type="PROSITE" id="PS00107">
    <property type="entry name" value="PROTEIN_KINASE_ATP"/>
    <property type="match status" value="1"/>
</dbReference>
<dbReference type="PROSITE" id="PS50011">
    <property type="entry name" value="PROTEIN_KINASE_DOM"/>
    <property type="match status" value="1"/>
</dbReference>
<dbReference type="PROSITE" id="PS00109">
    <property type="entry name" value="PROTEIN_KINASE_TYR"/>
    <property type="match status" value="1"/>
</dbReference>
<reference key="1">
    <citation type="journal article" date="2004" name="Science">
        <title>The 1.2-megabase genome sequence of Mimivirus.</title>
        <authorList>
            <person name="Raoult D."/>
            <person name="Audic S."/>
            <person name="Robert C."/>
            <person name="Abergel C."/>
            <person name="Renesto P."/>
            <person name="Ogata H."/>
            <person name="La Scola B."/>
            <person name="Susan M."/>
            <person name="Claverie J.-M."/>
        </authorList>
    </citation>
    <scope>NUCLEOTIDE SEQUENCE [LARGE SCALE GENOMIC DNA]</scope>
    <source>
        <strain>Rowbotham-Bradford</strain>
    </source>
</reference>
<feature type="chain" id="PRO_0000086851" description="Putative serine/threonine-protein kinase L673">
    <location>
        <begin position="1"/>
        <end position="545"/>
    </location>
</feature>
<feature type="domain" description="Cyclin N-terminal">
    <location>
        <begin position="13"/>
        <end position="125"/>
    </location>
</feature>
<feature type="domain" description="Protein kinase" evidence="1">
    <location>
        <begin position="264"/>
        <end position="543"/>
    </location>
</feature>
<feature type="active site" description="Proton acceptor" evidence="1 2">
    <location>
        <position position="384"/>
    </location>
</feature>
<feature type="binding site" evidence="1">
    <location>
        <begin position="270"/>
        <end position="278"/>
    </location>
    <ligand>
        <name>ATP</name>
        <dbReference type="ChEBI" id="CHEBI:30616"/>
    </ligand>
</feature>
<feature type="binding site" evidence="1">
    <location>
        <position position="291"/>
    </location>
    <ligand>
        <name>ATP</name>
        <dbReference type="ChEBI" id="CHEBI:30616"/>
    </ligand>
</feature>
<name>YL673_MIMIV</name>
<protein>
    <recommendedName>
        <fullName>Putative serine/threonine-protein kinase L673</fullName>
        <ecNumber>2.7.11.1</ecNumber>
    </recommendedName>
</protein>
<proteinExistence type="inferred from homology"/>
<sequence>MDQYNKYITTNKRLGLVNWMLNVSRIFKLRSHTFQSAVNIMDSYFLKIDFEPNAEELSQTAVLCLKISSMICEIRPLFMDDVLYLLDIDTDNEFTNNIISSQLCTVELSILEKLNYKVYYLTIWKYIKQFWAKRNLPEQYYHLAYSLANILLSTNDYLRFDPKILADKIINICIVLEEDPECYETLIEDELEYQYIHLIWNRAYHKFKDYFNAVISTTLLSKHQVKVPPIQLSSNIKFPNSIFCTKIYPEKEFTMYSKKTVKKIDFQNKLGSGTYGSVYKITYDDNQIAMKKIRNKSTFVIDSNMIREVNNLMILSGHPNIINIEGYYYWDLTSTMYIGLDLMDTSLAIYLTKNNISESLKIKYVLQLLEAINYMHSKGIMHRDLSASNILIKGSTLKIGDFGSARFFSGDTLDTKYTRNVCSINYRAMELLMGIFPYNNKIDIWSCGCLITEILTGKRIFNGLKEAEVINKIHDILGVPDADSMNMSVFLSKSKIPLVTQGTLFTPLNLYPNQFPIIYQMLDYNPYKRPNAENCLKKIKESFDS</sequence>
<keyword id="KW-0067">ATP-binding</keyword>
<keyword id="KW-0418">Kinase</keyword>
<keyword id="KW-0547">Nucleotide-binding</keyword>
<keyword id="KW-1185">Reference proteome</keyword>
<keyword id="KW-0723">Serine/threonine-protein kinase</keyword>
<keyword id="KW-0808">Transferase</keyword>
<accession>Q5UNT1</accession>